<accession>Q64356</accession>
<accession>Q0VEF9</accession>
<keyword id="KW-1185">Reference proteome</keyword>
<keyword id="KW-0964">Secreted</keyword>
<keyword id="KW-0732">Signal</keyword>
<gene>
    <name type="primary">Svs6</name>
    <name type="synonym">Svp6</name>
</gene>
<evidence type="ECO:0000255" key="1"/>
<evidence type="ECO:0000305" key="2"/>
<comment type="subcellular location">
    <subcellularLocation>
        <location>Secreted</location>
        <location>Extracellular space</location>
    </subcellularLocation>
</comment>
<comment type="tissue specificity">
    <text>Testis.</text>
</comment>
<comment type="induction">
    <text>By testosterone.</text>
</comment>
<comment type="similarity">
    <text evidence="2">Belongs to the SVP2/SVP5/SVP6 family.</text>
</comment>
<dbReference type="EMBL" id="U19486">
    <property type="protein sequence ID" value="AAC15243.1"/>
    <property type="molecule type" value="Genomic_DNA"/>
</dbReference>
<dbReference type="EMBL" id="L11393">
    <property type="protein sequence ID" value="AAA40157.1"/>
    <property type="molecule type" value="mRNA"/>
</dbReference>
<dbReference type="EMBL" id="S65753">
    <property type="protein sequence ID" value="AAB28235.1"/>
    <property type="molecule type" value="mRNA"/>
</dbReference>
<dbReference type="EMBL" id="BC119247">
    <property type="protein sequence ID" value="AAI19248.1"/>
    <property type="molecule type" value="mRNA"/>
</dbReference>
<dbReference type="EMBL" id="BC119249">
    <property type="protein sequence ID" value="AAI19250.1"/>
    <property type="molecule type" value="mRNA"/>
</dbReference>
<dbReference type="CCDS" id="CCDS17031.1"/>
<dbReference type="FunCoup" id="Q64356">
    <property type="interactions" value="33"/>
</dbReference>
<dbReference type="STRING" id="10090.ENSMUSP00000017144"/>
<dbReference type="iPTMnet" id="Q64356"/>
<dbReference type="PhosphoSitePlus" id="Q64356"/>
<dbReference type="PaxDb" id="10090-ENSMUSP00000017144"/>
<dbReference type="PeptideAtlas" id="Q64356"/>
<dbReference type="ProteomicsDB" id="254730"/>
<dbReference type="AGR" id="MGI:106178"/>
<dbReference type="MGI" id="MGI:106178">
    <property type="gene designation" value="Svs6"/>
</dbReference>
<dbReference type="InParanoid" id="Q64356"/>
<dbReference type="OrthoDB" id="9631559at2759"/>
<dbReference type="ChiTaRS" id="Svs6">
    <property type="organism name" value="mouse"/>
</dbReference>
<dbReference type="PRO" id="PR:Q64356"/>
<dbReference type="Proteomes" id="UP000000589">
    <property type="component" value="Unplaced"/>
</dbReference>
<dbReference type="RNAct" id="Q64356">
    <property type="molecule type" value="protein"/>
</dbReference>
<dbReference type="GO" id="GO:0005576">
    <property type="term" value="C:extracellular region"/>
    <property type="evidence" value="ECO:0007669"/>
    <property type="project" value="UniProtKB-SubCell"/>
</dbReference>
<dbReference type="InterPro" id="IPR035409">
    <property type="entry name" value="Svs4/5/6"/>
</dbReference>
<dbReference type="PANTHER" id="PTHR17498:SF1">
    <property type="entry name" value="SEMINAL VESICLE SECRETORY PROTEIN 6"/>
    <property type="match status" value="1"/>
</dbReference>
<dbReference type="PANTHER" id="PTHR17498">
    <property type="entry name" value="SEMINAL VESICLE SECRETORY PROTEIN 6-RELATED"/>
    <property type="match status" value="1"/>
</dbReference>
<dbReference type="Pfam" id="PF17381">
    <property type="entry name" value="Svs_4_5_6"/>
    <property type="match status" value="1"/>
</dbReference>
<sequence>MSPTSFFLLTMLLVLVTETAAKRPRERFSQAIEEFSSESSEANSPKSIVHEEVYEEKKFKRNMVNGEDGEDSKRASAGEIERSYLRKKEKQRFAQEMDK</sequence>
<reference key="1">
    <citation type="journal article" date="1995" name="J. Mol. Endocrinol.">
        <title>Structure and sequence of a mouse gene encoding an androgen-regulated protein: a new member of the seminal vesicle secretory protein family.</title>
        <authorList>
            <person name="Simon A.M."/>
            <person name="Veyssiere G."/>
            <person name="Jean C."/>
        </authorList>
    </citation>
    <scope>NUCLEOTIDE SEQUENCE</scope>
    <source>
        <strain>BALB/cJ</strain>
        <tissue>Liver</tissue>
    </source>
</reference>
<reference key="2">
    <citation type="journal article" date="1993" name="J. Mol. Endocrinol.">
        <title>Cloning and sequence analysis of a cDNA encoding an androgen-dependent mouse seminal vesicle secretory protein.</title>
        <authorList>
            <person name="Guilbaud C."/>
            <person name="Simon A.M."/>
            <person name="Veyssiere G."/>
            <person name="Jean C."/>
        </authorList>
    </citation>
    <scope>NUCLEOTIDE SEQUENCE</scope>
    <source>
        <strain>SWR/J</strain>
        <tissue>Seminal vesicle</tissue>
    </source>
</reference>
<reference key="3">
    <citation type="journal article" date="2004" name="Genome Res.">
        <title>The status, quality, and expansion of the NIH full-length cDNA project: the Mammalian Gene Collection (MGC).</title>
        <authorList>
            <consortium name="The MGC Project Team"/>
        </authorList>
    </citation>
    <scope>NUCLEOTIDE SEQUENCE [LARGE SCALE MRNA]</scope>
    <source>
        <tissue>Brain</tissue>
    </source>
</reference>
<organism>
    <name type="scientific">Mus musculus</name>
    <name type="common">Mouse</name>
    <dbReference type="NCBI Taxonomy" id="10090"/>
    <lineage>
        <taxon>Eukaryota</taxon>
        <taxon>Metazoa</taxon>
        <taxon>Chordata</taxon>
        <taxon>Craniata</taxon>
        <taxon>Vertebrata</taxon>
        <taxon>Euteleostomi</taxon>
        <taxon>Mammalia</taxon>
        <taxon>Eutheria</taxon>
        <taxon>Euarchontoglires</taxon>
        <taxon>Glires</taxon>
        <taxon>Rodentia</taxon>
        <taxon>Myomorpha</taxon>
        <taxon>Muroidea</taxon>
        <taxon>Muridae</taxon>
        <taxon>Murinae</taxon>
        <taxon>Mus</taxon>
        <taxon>Mus</taxon>
    </lineage>
</organism>
<feature type="signal peptide" evidence="1">
    <location>
        <begin position="1"/>
        <end position="21"/>
    </location>
</feature>
<feature type="chain" id="PRO_0000022456" description="Seminal vesicle secretory protein 6">
    <location>
        <begin position="22"/>
        <end position="99"/>
    </location>
</feature>
<protein>
    <recommendedName>
        <fullName>Seminal vesicle secretory protein 6</fullName>
    </recommendedName>
    <alternativeName>
        <fullName>SVSP99</fullName>
    </alternativeName>
    <alternativeName>
        <fullName>Seminal vesicle protein 6</fullName>
    </alternativeName>
    <alternativeName>
        <fullName>Seminal vesicle secretory protein VI</fullName>
        <shortName>SVS VI</shortName>
    </alternativeName>
</protein>
<proteinExistence type="evidence at transcript level"/>
<name>SVS6_MOUSE</name>